<reference key="1">
    <citation type="submission" date="2009-01" db="EMBL/GenBank/DDBJ databases">
        <title>Complete sequence of chromosome of Caldicellulosiruptor becscii DSM 6725.</title>
        <authorList>
            <person name="Lucas S."/>
            <person name="Copeland A."/>
            <person name="Lapidus A."/>
            <person name="Glavina del Rio T."/>
            <person name="Tice H."/>
            <person name="Bruce D."/>
            <person name="Goodwin L."/>
            <person name="Pitluck S."/>
            <person name="Sims D."/>
            <person name="Meincke L."/>
            <person name="Brettin T."/>
            <person name="Detter J.C."/>
            <person name="Han C."/>
            <person name="Larimer F."/>
            <person name="Land M."/>
            <person name="Hauser L."/>
            <person name="Kyrpides N."/>
            <person name="Ovchinnikova G."/>
            <person name="Kataeva I."/>
            <person name="Adams M.W.W."/>
        </authorList>
    </citation>
    <scope>NUCLEOTIDE SEQUENCE [LARGE SCALE GENOMIC DNA]</scope>
    <source>
        <strain>ATCC BAA-1888 / DSM 6725 / KCTC 15123 / Z-1320</strain>
    </source>
</reference>
<comment type="function">
    <text evidence="1">Nucleoside triphosphate pyrophosphatase that hydrolyzes dTTP and UTP. May have a dual role in cell division arrest and in preventing the incorporation of modified nucleotides into cellular nucleic acids.</text>
</comment>
<comment type="catalytic activity">
    <reaction evidence="1">
        <text>dTTP + H2O = dTMP + diphosphate + H(+)</text>
        <dbReference type="Rhea" id="RHEA:28534"/>
        <dbReference type="ChEBI" id="CHEBI:15377"/>
        <dbReference type="ChEBI" id="CHEBI:15378"/>
        <dbReference type="ChEBI" id="CHEBI:33019"/>
        <dbReference type="ChEBI" id="CHEBI:37568"/>
        <dbReference type="ChEBI" id="CHEBI:63528"/>
        <dbReference type="EC" id="3.6.1.9"/>
    </reaction>
</comment>
<comment type="catalytic activity">
    <reaction evidence="1">
        <text>UTP + H2O = UMP + diphosphate + H(+)</text>
        <dbReference type="Rhea" id="RHEA:29395"/>
        <dbReference type="ChEBI" id="CHEBI:15377"/>
        <dbReference type="ChEBI" id="CHEBI:15378"/>
        <dbReference type="ChEBI" id="CHEBI:33019"/>
        <dbReference type="ChEBI" id="CHEBI:46398"/>
        <dbReference type="ChEBI" id="CHEBI:57865"/>
        <dbReference type="EC" id="3.6.1.9"/>
    </reaction>
</comment>
<comment type="cofactor">
    <cofactor evidence="1">
        <name>a divalent metal cation</name>
        <dbReference type="ChEBI" id="CHEBI:60240"/>
    </cofactor>
</comment>
<comment type="subcellular location">
    <subcellularLocation>
        <location evidence="1">Cytoplasm</location>
    </subcellularLocation>
</comment>
<comment type="similarity">
    <text evidence="1">Belongs to the Maf family. YhdE subfamily.</text>
</comment>
<organism>
    <name type="scientific">Caldicellulosiruptor bescii (strain ATCC BAA-1888 / DSM 6725 / KCTC 15123 / Z-1320)</name>
    <name type="common">Anaerocellum thermophilum</name>
    <dbReference type="NCBI Taxonomy" id="521460"/>
    <lineage>
        <taxon>Bacteria</taxon>
        <taxon>Bacillati</taxon>
        <taxon>Bacillota</taxon>
        <taxon>Bacillota incertae sedis</taxon>
        <taxon>Caldicellulosiruptorales</taxon>
        <taxon>Caldicellulosiruptoraceae</taxon>
        <taxon>Caldicellulosiruptor</taxon>
    </lineage>
</organism>
<keyword id="KW-0963">Cytoplasm</keyword>
<keyword id="KW-0378">Hydrolase</keyword>
<keyword id="KW-0546">Nucleotide metabolism</keyword>
<gene>
    <name type="ordered locus">Athe_1300</name>
</gene>
<dbReference type="EC" id="3.6.1.9" evidence="1"/>
<dbReference type="EMBL" id="CP001393">
    <property type="protein sequence ID" value="ACM60400.1"/>
    <property type="molecule type" value="Genomic_DNA"/>
</dbReference>
<dbReference type="RefSeq" id="WP_015907777.1">
    <property type="nucleotide sequence ID" value="NC_012034.1"/>
</dbReference>
<dbReference type="SMR" id="B9MRU6"/>
<dbReference type="STRING" id="521460.Athe_1300"/>
<dbReference type="GeneID" id="31772649"/>
<dbReference type="KEGG" id="ate:Athe_1300"/>
<dbReference type="eggNOG" id="COG0424">
    <property type="taxonomic scope" value="Bacteria"/>
</dbReference>
<dbReference type="HOGENOM" id="CLU_040416_0_0_9"/>
<dbReference type="Proteomes" id="UP000007723">
    <property type="component" value="Chromosome"/>
</dbReference>
<dbReference type="GO" id="GO:0005737">
    <property type="term" value="C:cytoplasm"/>
    <property type="evidence" value="ECO:0007669"/>
    <property type="project" value="UniProtKB-SubCell"/>
</dbReference>
<dbReference type="GO" id="GO:0036218">
    <property type="term" value="F:dTTP diphosphatase activity"/>
    <property type="evidence" value="ECO:0007669"/>
    <property type="project" value="RHEA"/>
</dbReference>
<dbReference type="GO" id="GO:0036221">
    <property type="term" value="F:UTP diphosphatase activity"/>
    <property type="evidence" value="ECO:0007669"/>
    <property type="project" value="RHEA"/>
</dbReference>
<dbReference type="GO" id="GO:0009117">
    <property type="term" value="P:nucleotide metabolic process"/>
    <property type="evidence" value="ECO:0007669"/>
    <property type="project" value="UniProtKB-KW"/>
</dbReference>
<dbReference type="CDD" id="cd00555">
    <property type="entry name" value="Maf"/>
    <property type="match status" value="1"/>
</dbReference>
<dbReference type="FunFam" id="3.90.950.10:FF:000005">
    <property type="entry name" value="7-methyl-GTP pyrophosphatase"/>
    <property type="match status" value="1"/>
</dbReference>
<dbReference type="Gene3D" id="3.90.950.10">
    <property type="match status" value="1"/>
</dbReference>
<dbReference type="HAMAP" id="MF_00528">
    <property type="entry name" value="Maf"/>
    <property type="match status" value="1"/>
</dbReference>
<dbReference type="InterPro" id="IPR029001">
    <property type="entry name" value="ITPase-like_fam"/>
</dbReference>
<dbReference type="InterPro" id="IPR003697">
    <property type="entry name" value="Maf-like"/>
</dbReference>
<dbReference type="NCBIfam" id="TIGR00172">
    <property type="entry name" value="maf"/>
    <property type="match status" value="1"/>
</dbReference>
<dbReference type="PANTHER" id="PTHR43213">
    <property type="entry name" value="BIFUNCTIONAL DTTP/UTP PYROPHOSPHATASE/METHYLTRANSFERASE PROTEIN-RELATED"/>
    <property type="match status" value="1"/>
</dbReference>
<dbReference type="PANTHER" id="PTHR43213:SF5">
    <property type="entry name" value="BIFUNCTIONAL DTTP_UTP PYROPHOSPHATASE_METHYLTRANSFERASE PROTEIN-RELATED"/>
    <property type="match status" value="1"/>
</dbReference>
<dbReference type="Pfam" id="PF02545">
    <property type="entry name" value="Maf"/>
    <property type="match status" value="1"/>
</dbReference>
<dbReference type="PIRSF" id="PIRSF006305">
    <property type="entry name" value="Maf"/>
    <property type="match status" value="1"/>
</dbReference>
<dbReference type="SUPFAM" id="SSF52972">
    <property type="entry name" value="ITPase-like"/>
    <property type="match status" value="1"/>
</dbReference>
<accession>B9MRU6</accession>
<name>NTPPA_CALBD</name>
<protein>
    <recommendedName>
        <fullName evidence="1">dTTP/UTP pyrophosphatase</fullName>
        <shortName evidence="1">dTTPase/UTPase</shortName>
        <ecNumber evidence="1">3.6.1.9</ecNumber>
    </recommendedName>
    <alternativeName>
        <fullName evidence="1">Nucleoside triphosphate pyrophosphatase</fullName>
    </alternativeName>
    <alternativeName>
        <fullName evidence="1">Nucleotide pyrophosphatase</fullName>
        <shortName evidence="1">Nucleotide PPase</shortName>
    </alternativeName>
</protein>
<sequence>MKRLILASSSPRRIELLKQFGIEFEIIPSNIDESIDQSLSVEENVMQLAKKKAQEVFNKLREENKHFLVIAADTLVFVEGVILGKPSNEDEAFWMLRKISGKWHSVYTGVCIIDGPRERILVEYEKSNVYIKHMSDEEILRYISTKEPFDKAGAYAIQGFGSLIVERIDGCFYNVVGLPLYRLNIMLQKLGYDLMKGEL</sequence>
<proteinExistence type="inferred from homology"/>
<feature type="chain" id="PRO_1000146278" description="dTTP/UTP pyrophosphatase">
    <location>
        <begin position="1"/>
        <end position="199"/>
    </location>
</feature>
<feature type="active site" description="Proton acceptor" evidence="1">
    <location>
        <position position="73"/>
    </location>
</feature>
<feature type="site" description="Important for substrate specificity" evidence="1">
    <location>
        <position position="12"/>
    </location>
</feature>
<feature type="site" description="Important for substrate specificity" evidence="1">
    <location>
        <position position="74"/>
    </location>
</feature>
<feature type="site" description="Important for substrate specificity" evidence="1">
    <location>
        <position position="158"/>
    </location>
</feature>
<evidence type="ECO:0000255" key="1">
    <source>
        <dbReference type="HAMAP-Rule" id="MF_00528"/>
    </source>
</evidence>